<reference key="1">
    <citation type="journal article" date="2002" name="J. Virol.">
        <title>Lack of canonical E6 and E7 open reading frames in bird papillomaviruses: Fringilla coelebs papillomavirus and Psittacus erithacus timneh papillomavirus.</title>
        <authorList>
            <person name="Terai M."/>
            <person name="DeSalle R."/>
            <person name="Burk R.D."/>
        </authorList>
    </citation>
    <scope>NUCLEOTIDE SEQUENCE [GENOMIC DNA]</scope>
</reference>
<reference key="2">
    <citation type="submission" date="2004-01" db="EMBL/GenBank/DDBJ databases">
        <title>Sequencing of the complete genomes of BPV 3, BPV 5 and BPV 6.</title>
        <authorList>
            <person name="Delius H."/>
            <person name="de Villiers E.M."/>
        </authorList>
    </citation>
    <scope>NUCLEOTIDE SEQUENCE [GENOMIC DNA]</scope>
</reference>
<sequence>MLLLAPDSVAPFEVHIKGCSSLSLHGPLGSICIMSLTLIYWLLLLWVSFHFLSLCLAIILYLLLMSTITSLHGWD</sequence>
<dbReference type="EMBL" id="AF486184">
    <property type="protein sequence ID" value="AAN09955.1"/>
    <property type="molecule type" value="Genomic_DNA"/>
</dbReference>
<dbReference type="EMBL" id="AJ620207">
    <property type="protein sequence ID" value="CAF05677.1"/>
    <property type="molecule type" value="Genomic_DNA"/>
</dbReference>
<dbReference type="PIR" id="D61399">
    <property type="entry name" value="D61399"/>
</dbReference>
<dbReference type="RefSeq" id="NP_694445.1">
    <property type="nucleotide sequence ID" value="NC_004197.1"/>
</dbReference>
<dbReference type="GeneID" id="955385"/>
<dbReference type="KEGG" id="vg:955385"/>
<dbReference type="Proteomes" id="UP000006369">
    <property type="component" value="Genome"/>
</dbReference>
<dbReference type="Proteomes" id="UP000185274">
    <property type="component" value="Segment"/>
</dbReference>
<protein>
    <recommendedName>
        <fullName>Uncharacterized protein E8</fullName>
    </recommendedName>
</protein>
<feature type="chain" id="PRO_0000133472" description="Uncharacterized protein E8">
    <location>
        <begin position="1"/>
        <end position="75"/>
    </location>
</feature>
<accession>Q8BDD9</accession>
<organism>
    <name type="scientific">Bovine papillomavirus type 3</name>
    <dbReference type="NCBI Taxonomy" id="2758957"/>
    <lineage>
        <taxon>Viruses</taxon>
        <taxon>Monodnaviria</taxon>
        <taxon>Shotokuvirae</taxon>
        <taxon>Cossaviricota</taxon>
        <taxon>Papovaviricetes</taxon>
        <taxon>Zurhausenvirales</taxon>
        <taxon>Papillomaviridae</taxon>
        <taxon>Firstpapillomavirinae</taxon>
        <taxon>Xipapillomavirus</taxon>
        <taxon>Xipapillomavirus 1</taxon>
    </lineage>
</organism>
<proteinExistence type="predicted"/>
<organismHost>
    <name type="scientific">Bos taurus</name>
    <name type="common">Bovine</name>
    <dbReference type="NCBI Taxonomy" id="9913"/>
</organismHost>
<keyword id="KW-0244">Early protein</keyword>
<keyword id="KW-1185">Reference proteome</keyword>
<name>VE8_BPV3</name>